<keyword id="KW-0133">Cell shape</keyword>
<keyword id="KW-0961">Cell wall biogenesis/degradation</keyword>
<keyword id="KW-0413">Isomerase</keyword>
<keyword id="KW-0573">Peptidoglycan synthesis</keyword>
<organism>
    <name type="scientific">Trichodesmium erythraeum (strain IMS101)</name>
    <dbReference type="NCBI Taxonomy" id="203124"/>
    <lineage>
        <taxon>Bacteria</taxon>
        <taxon>Bacillati</taxon>
        <taxon>Cyanobacteriota</taxon>
        <taxon>Cyanophyceae</taxon>
        <taxon>Oscillatoriophycideae</taxon>
        <taxon>Oscillatoriales</taxon>
        <taxon>Microcoleaceae</taxon>
        <taxon>Trichodesmium</taxon>
    </lineage>
</organism>
<proteinExistence type="inferred from homology"/>
<gene>
    <name evidence="1" type="primary">murI</name>
    <name type="ordered locus">Tery_0161</name>
</gene>
<comment type="function">
    <text evidence="1">Provides the (R)-glutamate required for cell wall biosynthesis.</text>
</comment>
<comment type="catalytic activity">
    <reaction evidence="1">
        <text>L-glutamate = D-glutamate</text>
        <dbReference type="Rhea" id="RHEA:12813"/>
        <dbReference type="ChEBI" id="CHEBI:29985"/>
        <dbReference type="ChEBI" id="CHEBI:29986"/>
        <dbReference type="EC" id="5.1.1.3"/>
    </reaction>
</comment>
<comment type="pathway">
    <text evidence="1">Cell wall biogenesis; peptidoglycan biosynthesis.</text>
</comment>
<comment type="similarity">
    <text evidence="1">Belongs to the aspartate/glutamate racemases family.</text>
</comment>
<sequence length="270" mass="30095">MTTETRQKRIGIFDSGIGGLTVLRELYRQLPKESILYFADTARLPYGTRTTEEILQFVDEIITWLVKSGVKMVLMACNTSSALALEKVKSKFDVPILGLIVPGANTAVKQGKRIGVIATPATAASNAYRYAILEANASVQVWQVGCPYFVPLIEQNQLHDPYTYQIAEEYLMPLIQQQIDTLVYGCTHYPYLEPILRSLLPKSVIFVDPAVSLVKVVARELKIMNLENDKTPKPTKFVVSSSPQKFADLSLQLLGYKPDVQVISLPAMLK</sequence>
<feature type="chain" id="PRO_1000047635" description="Glutamate racemase">
    <location>
        <begin position="1"/>
        <end position="270"/>
    </location>
</feature>
<feature type="active site" description="Proton donor/acceptor" evidence="1">
    <location>
        <position position="77"/>
    </location>
</feature>
<feature type="active site" description="Proton donor/acceptor" evidence="1">
    <location>
        <position position="186"/>
    </location>
</feature>
<feature type="binding site" evidence="1">
    <location>
        <begin position="14"/>
        <end position="15"/>
    </location>
    <ligand>
        <name>substrate</name>
    </ligand>
</feature>
<feature type="binding site" evidence="1">
    <location>
        <begin position="46"/>
        <end position="47"/>
    </location>
    <ligand>
        <name>substrate</name>
    </ligand>
</feature>
<feature type="binding site" evidence="1">
    <location>
        <begin position="78"/>
        <end position="79"/>
    </location>
    <ligand>
        <name>substrate</name>
    </ligand>
</feature>
<feature type="binding site" evidence="1">
    <location>
        <begin position="187"/>
        <end position="188"/>
    </location>
    <ligand>
        <name>substrate</name>
    </ligand>
</feature>
<reference key="1">
    <citation type="journal article" date="2015" name="Proc. Natl. Acad. Sci. U.S.A.">
        <title>Trichodesmium genome maintains abundant, widespread noncoding DNA in situ, despite oligotrophic lifestyle.</title>
        <authorList>
            <person name="Walworth N."/>
            <person name="Pfreundt U."/>
            <person name="Nelson W.C."/>
            <person name="Mincer T."/>
            <person name="Heidelberg J.F."/>
            <person name="Fu F."/>
            <person name="Waterbury J.B."/>
            <person name="Glavina del Rio T."/>
            <person name="Goodwin L."/>
            <person name="Kyrpides N.C."/>
            <person name="Land M.L."/>
            <person name="Woyke T."/>
            <person name="Hutchins D.A."/>
            <person name="Hess W.R."/>
            <person name="Webb E.A."/>
        </authorList>
    </citation>
    <scope>NUCLEOTIDE SEQUENCE [LARGE SCALE GENOMIC DNA]</scope>
    <source>
        <strain>IMS101</strain>
    </source>
</reference>
<accession>Q11A19</accession>
<evidence type="ECO:0000255" key="1">
    <source>
        <dbReference type="HAMAP-Rule" id="MF_00258"/>
    </source>
</evidence>
<protein>
    <recommendedName>
        <fullName evidence="1">Glutamate racemase</fullName>
        <ecNumber evidence="1">5.1.1.3</ecNumber>
    </recommendedName>
</protein>
<name>MURI_TRIEI</name>
<dbReference type="EC" id="5.1.1.3" evidence="1"/>
<dbReference type="EMBL" id="CP000393">
    <property type="protein sequence ID" value="ABG49655.1"/>
    <property type="molecule type" value="Genomic_DNA"/>
</dbReference>
<dbReference type="RefSeq" id="WP_011610053.1">
    <property type="nucleotide sequence ID" value="NC_008312.1"/>
</dbReference>
<dbReference type="SMR" id="Q11A19"/>
<dbReference type="STRING" id="203124.Tery_0161"/>
<dbReference type="KEGG" id="ter:Tery_0161"/>
<dbReference type="eggNOG" id="COG0796">
    <property type="taxonomic scope" value="Bacteria"/>
</dbReference>
<dbReference type="HOGENOM" id="CLU_052344_0_2_3"/>
<dbReference type="OrthoDB" id="9801055at2"/>
<dbReference type="UniPathway" id="UPA00219"/>
<dbReference type="GO" id="GO:0008881">
    <property type="term" value="F:glutamate racemase activity"/>
    <property type="evidence" value="ECO:0007669"/>
    <property type="project" value="UniProtKB-UniRule"/>
</dbReference>
<dbReference type="GO" id="GO:0071555">
    <property type="term" value="P:cell wall organization"/>
    <property type="evidence" value="ECO:0007669"/>
    <property type="project" value="UniProtKB-KW"/>
</dbReference>
<dbReference type="GO" id="GO:0009252">
    <property type="term" value="P:peptidoglycan biosynthetic process"/>
    <property type="evidence" value="ECO:0007669"/>
    <property type="project" value="UniProtKB-UniRule"/>
</dbReference>
<dbReference type="GO" id="GO:0008360">
    <property type="term" value="P:regulation of cell shape"/>
    <property type="evidence" value="ECO:0007669"/>
    <property type="project" value="UniProtKB-KW"/>
</dbReference>
<dbReference type="FunFam" id="3.40.50.1860:FF:000002">
    <property type="entry name" value="Glutamate racemase"/>
    <property type="match status" value="1"/>
</dbReference>
<dbReference type="Gene3D" id="3.40.50.1860">
    <property type="match status" value="2"/>
</dbReference>
<dbReference type="HAMAP" id="MF_00258">
    <property type="entry name" value="Glu_racemase"/>
    <property type="match status" value="1"/>
</dbReference>
<dbReference type="InterPro" id="IPR015942">
    <property type="entry name" value="Asp/Glu/hydantoin_racemase"/>
</dbReference>
<dbReference type="InterPro" id="IPR001920">
    <property type="entry name" value="Asp/Glu_race"/>
</dbReference>
<dbReference type="InterPro" id="IPR033134">
    <property type="entry name" value="Asp/Glu_racemase_AS_2"/>
</dbReference>
<dbReference type="InterPro" id="IPR004391">
    <property type="entry name" value="Glu_race"/>
</dbReference>
<dbReference type="NCBIfam" id="TIGR00067">
    <property type="entry name" value="glut_race"/>
    <property type="match status" value="1"/>
</dbReference>
<dbReference type="PANTHER" id="PTHR21198">
    <property type="entry name" value="GLUTAMATE RACEMASE"/>
    <property type="match status" value="1"/>
</dbReference>
<dbReference type="PANTHER" id="PTHR21198:SF2">
    <property type="entry name" value="GLUTAMATE RACEMASE"/>
    <property type="match status" value="1"/>
</dbReference>
<dbReference type="Pfam" id="PF01177">
    <property type="entry name" value="Asp_Glu_race"/>
    <property type="match status" value="1"/>
</dbReference>
<dbReference type="SUPFAM" id="SSF53681">
    <property type="entry name" value="Aspartate/glutamate racemase"/>
    <property type="match status" value="2"/>
</dbReference>
<dbReference type="PROSITE" id="PS00924">
    <property type="entry name" value="ASP_GLU_RACEMASE_2"/>
    <property type="match status" value="1"/>
</dbReference>